<feature type="chain" id="PRO_0000128522" description="Small ribosomal subunit protein uS17A">
    <location>
        <begin position="1"/>
        <end position="152"/>
    </location>
</feature>
<feature type="sequence conflict" description="In Ref. 3; AAB63874." evidence="3" ref="3">
    <original>Y</original>
    <variation>D</variation>
    <location>
        <position position="47"/>
    </location>
</feature>
<evidence type="ECO:0000250" key="1">
    <source>
        <dbReference type="UniProtKB" id="P0CX47"/>
    </source>
</evidence>
<evidence type="ECO:0000269" key="2">
    <source>
    </source>
</evidence>
<evidence type="ECO:0000305" key="3"/>
<sequence>MATELVVQSERAFQKQPHIFQNAKKGAGRRWYKDVGLGFKTPAEAIYGEYVDKKCPFVGQVSIRGRILTGTVVSTKMHRTIIIRREYLHFIPKYNRYEKRHKNLAAHVSPAFRINEGDVVTVGQCRPLSKTVRFNVLRVVKHTEGPKQFGKF</sequence>
<protein>
    <recommendedName>
        <fullName evidence="3">Small ribosomal subunit protein uS17A</fullName>
    </recommendedName>
    <alternativeName>
        <fullName>40S ribosomal protein S11-A</fullName>
    </alternativeName>
</protein>
<organism>
    <name type="scientific">Schizosaccharomyces pombe (strain 972 / ATCC 24843)</name>
    <name type="common">Fission yeast</name>
    <dbReference type="NCBI Taxonomy" id="284812"/>
    <lineage>
        <taxon>Eukaryota</taxon>
        <taxon>Fungi</taxon>
        <taxon>Dikarya</taxon>
        <taxon>Ascomycota</taxon>
        <taxon>Taphrinomycotina</taxon>
        <taxon>Schizosaccharomycetes</taxon>
        <taxon>Schizosaccharomycetales</taxon>
        <taxon>Schizosaccharomycetaceae</taxon>
        <taxon>Schizosaccharomyces</taxon>
    </lineage>
</organism>
<keyword id="KW-0002">3D-structure</keyword>
<keyword id="KW-0963">Cytoplasm</keyword>
<keyword id="KW-0539">Nucleus</keyword>
<keyword id="KW-1185">Reference proteome</keyword>
<keyword id="KW-0687">Ribonucleoprotein</keyword>
<keyword id="KW-0689">Ribosomal protein</keyword>
<keyword id="KW-0694">RNA-binding</keyword>
<keyword id="KW-0699">rRNA-binding</keyword>
<reference key="1">
    <citation type="journal article" date="2002" name="Nature">
        <title>The genome sequence of Schizosaccharomyces pombe.</title>
        <authorList>
            <person name="Wood V."/>
            <person name="Gwilliam R."/>
            <person name="Rajandream M.A."/>
            <person name="Lyne M.H."/>
            <person name="Lyne R."/>
            <person name="Stewart A."/>
            <person name="Sgouros J.G."/>
            <person name="Peat N."/>
            <person name="Hayles J."/>
            <person name="Baker S.G."/>
            <person name="Basham D."/>
            <person name="Bowman S."/>
            <person name="Brooks K."/>
            <person name="Brown D."/>
            <person name="Brown S."/>
            <person name="Chillingworth T."/>
            <person name="Churcher C.M."/>
            <person name="Collins M."/>
            <person name="Connor R."/>
            <person name="Cronin A."/>
            <person name="Davis P."/>
            <person name="Feltwell T."/>
            <person name="Fraser A."/>
            <person name="Gentles S."/>
            <person name="Goble A."/>
            <person name="Hamlin N."/>
            <person name="Harris D.E."/>
            <person name="Hidalgo J."/>
            <person name="Hodgson G."/>
            <person name="Holroyd S."/>
            <person name="Hornsby T."/>
            <person name="Howarth S."/>
            <person name="Huckle E.J."/>
            <person name="Hunt S."/>
            <person name="Jagels K."/>
            <person name="James K.D."/>
            <person name="Jones L."/>
            <person name="Jones M."/>
            <person name="Leather S."/>
            <person name="McDonald S."/>
            <person name="McLean J."/>
            <person name="Mooney P."/>
            <person name="Moule S."/>
            <person name="Mungall K.L."/>
            <person name="Murphy L.D."/>
            <person name="Niblett D."/>
            <person name="Odell C."/>
            <person name="Oliver K."/>
            <person name="O'Neil S."/>
            <person name="Pearson D."/>
            <person name="Quail M.A."/>
            <person name="Rabbinowitsch E."/>
            <person name="Rutherford K.M."/>
            <person name="Rutter S."/>
            <person name="Saunders D."/>
            <person name="Seeger K."/>
            <person name="Sharp S."/>
            <person name="Skelton J."/>
            <person name="Simmonds M.N."/>
            <person name="Squares R."/>
            <person name="Squares S."/>
            <person name="Stevens K."/>
            <person name="Taylor K."/>
            <person name="Taylor R.G."/>
            <person name="Tivey A."/>
            <person name="Walsh S.V."/>
            <person name="Warren T."/>
            <person name="Whitehead S."/>
            <person name="Woodward J.R."/>
            <person name="Volckaert G."/>
            <person name="Aert R."/>
            <person name="Robben J."/>
            <person name="Grymonprez B."/>
            <person name="Weltjens I."/>
            <person name="Vanstreels E."/>
            <person name="Rieger M."/>
            <person name="Schaefer M."/>
            <person name="Mueller-Auer S."/>
            <person name="Gabel C."/>
            <person name="Fuchs M."/>
            <person name="Duesterhoeft A."/>
            <person name="Fritzc C."/>
            <person name="Holzer E."/>
            <person name="Moestl D."/>
            <person name="Hilbert H."/>
            <person name="Borzym K."/>
            <person name="Langer I."/>
            <person name="Beck A."/>
            <person name="Lehrach H."/>
            <person name="Reinhardt R."/>
            <person name="Pohl T.M."/>
            <person name="Eger P."/>
            <person name="Zimmermann W."/>
            <person name="Wedler H."/>
            <person name="Wambutt R."/>
            <person name="Purnelle B."/>
            <person name="Goffeau A."/>
            <person name="Cadieu E."/>
            <person name="Dreano S."/>
            <person name="Gloux S."/>
            <person name="Lelaure V."/>
            <person name="Mottier S."/>
            <person name="Galibert F."/>
            <person name="Aves S.J."/>
            <person name="Xiang Z."/>
            <person name="Hunt C."/>
            <person name="Moore K."/>
            <person name="Hurst S.M."/>
            <person name="Lucas M."/>
            <person name="Rochet M."/>
            <person name="Gaillardin C."/>
            <person name="Tallada V.A."/>
            <person name="Garzon A."/>
            <person name="Thode G."/>
            <person name="Daga R.R."/>
            <person name="Cruzado L."/>
            <person name="Jimenez J."/>
            <person name="Sanchez M."/>
            <person name="del Rey F."/>
            <person name="Benito J."/>
            <person name="Dominguez A."/>
            <person name="Revuelta J.L."/>
            <person name="Moreno S."/>
            <person name="Armstrong J."/>
            <person name="Forsburg S.L."/>
            <person name="Cerutti L."/>
            <person name="Lowe T."/>
            <person name="McCombie W.R."/>
            <person name="Paulsen I."/>
            <person name="Potashkin J."/>
            <person name="Shpakovski G.V."/>
            <person name="Ussery D."/>
            <person name="Barrell B.G."/>
            <person name="Nurse P."/>
        </authorList>
    </citation>
    <scope>NUCLEOTIDE SEQUENCE [LARGE SCALE GENOMIC DNA]</scope>
    <source>
        <strain>972 / ATCC 24843</strain>
    </source>
</reference>
<reference key="2">
    <citation type="submission" date="1997-02" db="EMBL/GenBank/DDBJ databases">
        <title>S.pombe ribosome S11 homolog.</title>
        <authorList>
            <person name="Kawamukai M."/>
        </authorList>
    </citation>
    <scope>NUCLEOTIDE SEQUENCE [MRNA] OF 14-152</scope>
</reference>
<reference key="3">
    <citation type="submission" date="1997-04" db="EMBL/GenBank/DDBJ databases">
        <authorList>
            <person name="Jang Y.-J."/>
            <person name="Yoo H.-S."/>
        </authorList>
    </citation>
    <scope>NUCLEOTIDE SEQUENCE [MRNA] OF 36-131</scope>
    <source>
        <strain>972 / ATCC 24843</strain>
    </source>
</reference>
<reference key="4">
    <citation type="journal article" date="2006" name="Nat. Biotechnol.">
        <title>ORFeome cloning and global analysis of protein localization in the fission yeast Schizosaccharomyces pombe.</title>
        <authorList>
            <person name="Matsuyama A."/>
            <person name="Arai R."/>
            <person name="Yashiroda Y."/>
            <person name="Shirai A."/>
            <person name="Kamata A."/>
            <person name="Sekido S."/>
            <person name="Kobayashi Y."/>
            <person name="Hashimoto A."/>
            <person name="Hamamoto M."/>
            <person name="Hiraoka Y."/>
            <person name="Horinouchi S."/>
            <person name="Yoshida M."/>
        </authorList>
    </citation>
    <scope>SUBCELLULAR LOCATION [LARGE SCALE ANALYSIS]</scope>
</reference>
<proteinExistence type="evidence at protein level"/>
<name>RS11A_SCHPO</name>
<gene>
    <name type="primary">rps1101</name>
    <name type="synonym">rps11</name>
    <name type="synonym">rps11a</name>
    <name type="ORF">SPAC31G5.03</name>
</gene>
<dbReference type="EMBL" id="CU329670">
    <property type="protein sequence ID" value="CAB11687.1"/>
    <property type="molecule type" value="Genomic_DNA"/>
</dbReference>
<dbReference type="EMBL" id="AB000704">
    <property type="protein sequence ID" value="BAA19165.1"/>
    <property type="molecule type" value="mRNA"/>
</dbReference>
<dbReference type="EMBL" id="U97382">
    <property type="protein sequence ID" value="AAB63874.1"/>
    <property type="status" value="ALT_FRAME"/>
    <property type="molecule type" value="mRNA"/>
</dbReference>
<dbReference type="PIR" id="T37678">
    <property type="entry name" value="T37678"/>
</dbReference>
<dbReference type="RefSeq" id="NP_594003.1">
    <property type="nucleotide sequence ID" value="NM_001019429.2"/>
</dbReference>
<dbReference type="RefSeq" id="NP_594672.1">
    <property type="nucleotide sequence ID" value="NM_001020101.2"/>
</dbReference>
<dbReference type="PDB" id="9AXV">
    <property type="method" value="EM"/>
    <property type="resolution" value="2.40 A"/>
    <property type="chains" value="AO=1-152"/>
</dbReference>
<dbReference type="PDBsum" id="9AXV"/>
<dbReference type="EMDB" id="EMD-43972"/>
<dbReference type="EMDB" id="EMD-43976"/>
<dbReference type="SMR" id="P0CT73"/>
<dbReference type="FunCoup" id="P0CT73">
    <property type="interactions" value="497"/>
</dbReference>
<dbReference type="STRING" id="284812.P0CT73"/>
<dbReference type="iPTMnet" id="P0CT73"/>
<dbReference type="PaxDb" id="4896-SPAC144.11.1"/>
<dbReference type="EnsemblFungi" id="SPAC144.11.1">
    <property type="protein sequence ID" value="SPAC144.11.1:pep"/>
    <property type="gene ID" value="SPAC144.11"/>
</dbReference>
<dbReference type="EnsemblFungi" id="SPAC31G5.03.1">
    <property type="protein sequence ID" value="SPAC31G5.03.1:pep"/>
    <property type="gene ID" value="SPAC31G5.03"/>
</dbReference>
<dbReference type="GeneID" id="2542904"/>
<dbReference type="GeneID" id="2543120"/>
<dbReference type="KEGG" id="spo:2542904"/>
<dbReference type="KEGG" id="spo:2543120"/>
<dbReference type="PomBase" id="SPAC31G5.03">
    <property type="gene designation" value="rps1101"/>
</dbReference>
<dbReference type="VEuPathDB" id="FungiDB:SPAC144.11"/>
<dbReference type="VEuPathDB" id="FungiDB:SPAC31G5.03"/>
<dbReference type="eggNOG" id="KOG1728">
    <property type="taxonomic scope" value="Eukaryota"/>
</dbReference>
<dbReference type="InParanoid" id="P0CT73"/>
<dbReference type="OMA" id="DYEKCPF"/>
<dbReference type="PhylomeDB" id="P0CT73"/>
<dbReference type="Reactome" id="R-SPO-156827">
    <property type="pathway name" value="L13a-mediated translational silencing of Ceruloplasmin expression"/>
</dbReference>
<dbReference type="Reactome" id="R-SPO-1799339">
    <property type="pathway name" value="SRP-dependent cotranslational protein targeting to membrane"/>
</dbReference>
<dbReference type="Reactome" id="R-SPO-72649">
    <property type="pathway name" value="Translation initiation complex formation"/>
</dbReference>
<dbReference type="Reactome" id="R-SPO-72689">
    <property type="pathway name" value="Formation of a pool of free 40S subunits"/>
</dbReference>
<dbReference type="Reactome" id="R-SPO-72695">
    <property type="pathway name" value="Formation of the ternary complex, and subsequently, the 43S complex"/>
</dbReference>
<dbReference type="Reactome" id="R-SPO-72702">
    <property type="pathway name" value="Ribosomal scanning and start codon recognition"/>
</dbReference>
<dbReference type="Reactome" id="R-SPO-72706">
    <property type="pathway name" value="GTP hydrolysis and joining of the 60S ribosomal subunit"/>
</dbReference>
<dbReference type="Reactome" id="R-SPO-975956">
    <property type="pathway name" value="Nonsense Mediated Decay (NMD) independent of the Exon Junction Complex (EJC)"/>
</dbReference>
<dbReference type="Reactome" id="R-SPO-975957">
    <property type="pathway name" value="Nonsense Mediated Decay (NMD) enhanced by the Exon Junction Complex (EJC)"/>
</dbReference>
<dbReference type="PRO" id="PR:P0CT73"/>
<dbReference type="Proteomes" id="UP000002485">
    <property type="component" value="Chromosome I"/>
</dbReference>
<dbReference type="GO" id="GO:0005829">
    <property type="term" value="C:cytosol"/>
    <property type="evidence" value="ECO:0007005"/>
    <property type="project" value="PomBase"/>
</dbReference>
<dbReference type="GO" id="GO:0022627">
    <property type="term" value="C:cytosolic small ribosomal subunit"/>
    <property type="evidence" value="ECO:0000269"/>
    <property type="project" value="PomBase"/>
</dbReference>
<dbReference type="GO" id="GO:0005634">
    <property type="term" value="C:nucleus"/>
    <property type="evidence" value="ECO:0007005"/>
    <property type="project" value="PomBase"/>
</dbReference>
<dbReference type="GO" id="GO:0019843">
    <property type="term" value="F:rRNA binding"/>
    <property type="evidence" value="ECO:0007669"/>
    <property type="project" value="UniProtKB-KW"/>
</dbReference>
<dbReference type="GO" id="GO:0003735">
    <property type="term" value="F:structural constituent of ribosome"/>
    <property type="evidence" value="ECO:0000318"/>
    <property type="project" value="GO_Central"/>
</dbReference>
<dbReference type="GO" id="GO:0002181">
    <property type="term" value="P:cytoplasmic translation"/>
    <property type="evidence" value="ECO:0000266"/>
    <property type="project" value="PomBase"/>
</dbReference>
<dbReference type="GO" id="GO:0042254">
    <property type="term" value="P:ribosome biogenesis"/>
    <property type="evidence" value="ECO:0000266"/>
    <property type="project" value="PomBase"/>
</dbReference>
<dbReference type="CDD" id="cd00364">
    <property type="entry name" value="Ribosomal_uS17"/>
    <property type="match status" value="1"/>
</dbReference>
<dbReference type="FunFam" id="2.40.50.1000:FF:000001">
    <property type="entry name" value="40S ribosomal protein S11"/>
    <property type="match status" value="1"/>
</dbReference>
<dbReference type="Gene3D" id="2.40.50.1000">
    <property type="match status" value="1"/>
</dbReference>
<dbReference type="InterPro" id="IPR012340">
    <property type="entry name" value="NA-bd_OB-fold"/>
</dbReference>
<dbReference type="InterPro" id="IPR000266">
    <property type="entry name" value="Ribosomal_uS17"/>
</dbReference>
<dbReference type="InterPro" id="IPR028333">
    <property type="entry name" value="Ribosomal_uS17_arc/euk"/>
</dbReference>
<dbReference type="InterPro" id="IPR019979">
    <property type="entry name" value="Ribosomal_uS17_CS"/>
</dbReference>
<dbReference type="InterPro" id="IPR032440">
    <property type="entry name" value="Ribosomal_uS17_N"/>
</dbReference>
<dbReference type="NCBIfam" id="NF006345">
    <property type="entry name" value="PRK08572.1"/>
    <property type="match status" value="1"/>
</dbReference>
<dbReference type="NCBIfam" id="TIGR03630">
    <property type="entry name" value="uS17_arch"/>
    <property type="match status" value="1"/>
</dbReference>
<dbReference type="PANTHER" id="PTHR10744">
    <property type="entry name" value="40S RIBOSOMAL PROTEIN S11 FAMILY MEMBER"/>
    <property type="match status" value="1"/>
</dbReference>
<dbReference type="PANTHER" id="PTHR10744:SF9">
    <property type="entry name" value="40S RIBOSOMAL PROTEIN S11-RELATED"/>
    <property type="match status" value="1"/>
</dbReference>
<dbReference type="Pfam" id="PF00366">
    <property type="entry name" value="Ribosomal_S17"/>
    <property type="match status" value="1"/>
</dbReference>
<dbReference type="Pfam" id="PF16205">
    <property type="entry name" value="Ribosomal_S17_N"/>
    <property type="match status" value="1"/>
</dbReference>
<dbReference type="PRINTS" id="PR00973">
    <property type="entry name" value="RIBOSOMALS17"/>
</dbReference>
<dbReference type="SUPFAM" id="SSF50249">
    <property type="entry name" value="Nucleic acid-binding proteins"/>
    <property type="match status" value="1"/>
</dbReference>
<dbReference type="PROSITE" id="PS00056">
    <property type="entry name" value="RIBOSOMAL_S17"/>
    <property type="match status" value="1"/>
</dbReference>
<accession>P0CT73</accession>
<accession>O14385</accession>
<accession>P79013</accession>
<comment type="function">
    <text evidence="1">Component of the ribosome, a large ribonucleoprotein complex responsible for the synthesis of proteins in the cell. The small ribosomal subunit (SSU) binds messenger RNAs (mRNAs) and translates the encoded message by selecting cognate aminoacyl-transfer RNA (tRNA) molecules. The large subunit (LSU) contains the ribosomal catalytic site termed the peptidyl transferase center (PTC), which catalyzes the formation of peptide bonds, thereby polymerizing the amino acids delivered by tRNAs into a polypeptide chain. The nascent polypeptides leave the ribosome through a tunnel in the LSU and interact with protein factors that function in enzymatic processing, targeting, and the membrane insertion of nascent chains at the exit of the ribosomal tunnel.</text>
</comment>
<comment type="subunit">
    <text evidence="1">Component of the small ribosomal subunit (SSU). Mature yeast ribosomes consist of a small (40S) and a large (60S) subunit. The 40S small subunit contains 1 molecule of ribosomal RNA (18S rRNA) and at least 33 different proteins. The large 60S subunit contains 3 rRNA molecules (25S, 5.8S and 5S rRNA) and at least 46 different proteins.</text>
</comment>
<comment type="subcellular location">
    <subcellularLocation>
        <location evidence="2">Cytoplasm</location>
    </subcellularLocation>
    <subcellularLocation>
        <location evidence="2">Nucleus</location>
    </subcellularLocation>
</comment>
<comment type="miscellaneous">
    <text>There are 2 genes for uS17 in S.pombe.</text>
</comment>
<comment type="similarity">
    <text evidence="3">Belongs to the universal ribosomal protein uS17 family.</text>
</comment>
<comment type="sequence caution" evidence="3">
    <conflict type="frameshift">
        <sequence resource="EMBL-CDS" id="AAB63874"/>
    </conflict>
</comment>